<accession>Q83M81</accession>
<protein>
    <recommendedName>
        <fullName evidence="1">Esterase FrsA</fullName>
        <ecNumber evidence="1">3.1.1.1</ecNumber>
    </recommendedName>
</protein>
<feature type="chain" id="PRO_0000197158" description="Esterase FrsA">
    <location>
        <begin position="1"/>
        <end position="414"/>
    </location>
</feature>
<dbReference type="EC" id="3.1.1.1" evidence="1"/>
<dbReference type="EMBL" id="AE005674">
    <property type="protein sequence ID" value="AAN41946.1"/>
    <property type="molecule type" value="Genomic_DNA"/>
</dbReference>
<dbReference type="EMBL" id="AE014073">
    <property type="protein sequence ID" value="AAP15833.1"/>
    <property type="molecule type" value="Genomic_DNA"/>
</dbReference>
<dbReference type="RefSeq" id="NP_706239.1">
    <property type="nucleotide sequence ID" value="NC_004337.2"/>
</dbReference>
<dbReference type="RefSeq" id="WP_000189558.1">
    <property type="nucleotide sequence ID" value="NZ_WPGW01000070.1"/>
</dbReference>
<dbReference type="SMR" id="Q83M81"/>
<dbReference type="STRING" id="198214.SF0287"/>
<dbReference type="ESTHER" id="shifl-yafa">
    <property type="family name" value="Duf_1100-R"/>
</dbReference>
<dbReference type="PaxDb" id="198214-SF0287"/>
<dbReference type="GeneID" id="1027422"/>
<dbReference type="KEGG" id="sfl:SF0287"/>
<dbReference type="KEGG" id="sfx:S0308"/>
<dbReference type="PATRIC" id="fig|198214.7.peg.328"/>
<dbReference type="HOGENOM" id="CLU_036819_0_0_6"/>
<dbReference type="Proteomes" id="UP000001006">
    <property type="component" value="Chromosome"/>
</dbReference>
<dbReference type="Proteomes" id="UP000002673">
    <property type="component" value="Chromosome"/>
</dbReference>
<dbReference type="GO" id="GO:0106435">
    <property type="term" value="F:carboxylesterase activity"/>
    <property type="evidence" value="ECO:0007669"/>
    <property type="project" value="UniProtKB-EC"/>
</dbReference>
<dbReference type="FunFam" id="3.40.50.1820:FF:000022">
    <property type="entry name" value="Esterase FrsA"/>
    <property type="match status" value="1"/>
</dbReference>
<dbReference type="Gene3D" id="3.40.50.1820">
    <property type="entry name" value="alpha/beta hydrolase"/>
    <property type="match status" value="1"/>
</dbReference>
<dbReference type="HAMAP" id="MF_01063">
    <property type="entry name" value="FrsA"/>
    <property type="match status" value="1"/>
</dbReference>
<dbReference type="InterPro" id="IPR029058">
    <property type="entry name" value="AB_hydrolase_fold"/>
</dbReference>
<dbReference type="InterPro" id="IPR043423">
    <property type="entry name" value="FrsA"/>
</dbReference>
<dbReference type="InterPro" id="IPR010520">
    <property type="entry name" value="FrsA-like"/>
</dbReference>
<dbReference type="InterPro" id="IPR050261">
    <property type="entry name" value="FrsA_esterase"/>
</dbReference>
<dbReference type="NCBIfam" id="NF003460">
    <property type="entry name" value="PRK05077.1"/>
    <property type="match status" value="1"/>
</dbReference>
<dbReference type="PANTHER" id="PTHR22946">
    <property type="entry name" value="DIENELACTONE HYDROLASE DOMAIN-CONTAINING PROTEIN-RELATED"/>
    <property type="match status" value="1"/>
</dbReference>
<dbReference type="PANTHER" id="PTHR22946:SF4">
    <property type="entry name" value="ESTERASE FRSA"/>
    <property type="match status" value="1"/>
</dbReference>
<dbReference type="Pfam" id="PF06500">
    <property type="entry name" value="FrsA-like"/>
    <property type="match status" value="1"/>
</dbReference>
<dbReference type="SUPFAM" id="SSF53474">
    <property type="entry name" value="alpha/beta-Hydrolases"/>
    <property type="match status" value="1"/>
</dbReference>
<comment type="function">
    <text evidence="1">Catalyzes the hydrolysis of esters.</text>
</comment>
<comment type="catalytic activity">
    <reaction evidence="1">
        <text>a carboxylic ester + H2O = an alcohol + a carboxylate + H(+)</text>
        <dbReference type="Rhea" id="RHEA:21164"/>
        <dbReference type="ChEBI" id="CHEBI:15377"/>
        <dbReference type="ChEBI" id="CHEBI:15378"/>
        <dbReference type="ChEBI" id="CHEBI:29067"/>
        <dbReference type="ChEBI" id="CHEBI:30879"/>
        <dbReference type="ChEBI" id="CHEBI:33308"/>
        <dbReference type="EC" id="3.1.1.1"/>
    </reaction>
</comment>
<comment type="similarity">
    <text evidence="1">Belongs to the FrsA family.</text>
</comment>
<proteinExistence type="inferred from homology"/>
<organism>
    <name type="scientific">Shigella flexneri</name>
    <dbReference type="NCBI Taxonomy" id="623"/>
    <lineage>
        <taxon>Bacteria</taxon>
        <taxon>Pseudomonadati</taxon>
        <taxon>Pseudomonadota</taxon>
        <taxon>Gammaproteobacteria</taxon>
        <taxon>Enterobacterales</taxon>
        <taxon>Enterobacteriaceae</taxon>
        <taxon>Shigella</taxon>
    </lineage>
</organism>
<keyword id="KW-0378">Hydrolase</keyword>
<keyword id="KW-1185">Reference proteome</keyword>
<keyword id="KW-0719">Serine esterase</keyword>
<gene>
    <name evidence="1" type="primary">frsA</name>
    <name type="ordered locus">SF0287</name>
    <name type="ordered locus">S0308</name>
</gene>
<reference key="1">
    <citation type="journal article" date="2002" name="Nucleic Acids Res.">
        <title>Genome sequence of Shigella flexneri 2a: insights into pathogenicity through comparison with genomes of Escherichia coli K12 and O157.</title>
        <authorList>
            <person name="Jin Q."/>
            <person name="Yuan Z."/>
            <person name="Xu J."/>
            <person name="Wang Y."/>
            <person name="Shen Y."/>
            <person name="Lu W."/>
            <person name="Wang J."/>
            <person name="Liu H."/>
            <person name="Yang J."/>
            <person name="Yang F."/>
            <person name="Zhang X."/>
            <person name="Zhang J."/>
            <person name="Yang G."/>
            <person name="Wu H."/>
            <person name="Qu D."/>
            <person name="Dong J."/>
            <person name="Sun L."/>
            <person name="Xue Y."/>
            <person name="Zhao A."/>
            <person name="Gao Y."/>
            <person name="Zhu J."/>
            <person name="Kan B."/>
            <person name="Ding K."/>
            <person name="Chen S."/>
            <person name="Cheng H."/>
            <person name="Yao Z."/>
            <person name="He B."/>
            <person name="Chen R."/>
            <person name="Ma D."/>
            <person name="Qiang B."/>
            <person name="Wen Y."/>
            <person name="Hou Y."/>
            <person name="Yu J."/>
        </authorList>
    </citation>
    <scope>NUCLEOTIDE SEQUENCE [LARGE SCALE GENOMIC DNA]</scope>
    <source>
        <strain>301 / Serotype 2a</strain>
    </source>
</reference>
<reference key="2">
    <citation type="journal article" date="2003" name="Infect. Immun.">
        <title>Complete genome sequence and comparative genomics of Shigella flexneri serotype 2a strain 2457T.</title>
        <authorList>
            <person name="Wei J."/>
            <person name="Goldberg M.B."/>
            <person name="Burland V."/>
            <person name="Venkatesan M.M."/>
            <person name="Deng W."/>
            <person name="Fournier G."/>
            <person name="Mayhew G.F."/>
            <person name="Plunkett G. III"/>
            <person name="Rose D.J."/>
            <person name="Darling A."/>
            <person name="Mau B."/>
            <person name="Perna N.T."/>
            <person name="Payne S.M."/>
            <person name="Runyen-Janecky L.J."/>
            <person name="Zhou S."/>
            <person name="Schwartz D.C."/>
            <person name="Blattner F.R."/>
        </authorList>
    </citation>
    <scope>NUCLEOTIDE SEQUENCE [LARGE SCALE GENOMIC DNA]</scope>
    <source>
        <strain>ATCC 700930 / 2457T / Serotype 2a</strain>
    </source>
</reference>
<sequence>MTQANLSETLFKPRFKHPETSTLVRRFNHGAQPPVQSALDGKTIPHWYRMINRLMWIWRGIDPREILDVQARIVMSDAERTDDDLYDTVIGYRGGNWIYEWATQAMVWQQKACTEEDPQLSGRHWLHAATLYNIAAYPHLKGDDLAEQAQALSNRAYEEAAQRLPGTMRQMEFTVPGGAPITGFLHMPKGDGPFPTVLMCGGLDAMQTDYYSLYERYFAPRGIAMLTIDMPSVGFSSKWKLTQDSSLLHQHVLKALPNVPWVDHTRVAAFGFRFGANVAVRLAYLESPRLKAVACLGPVVHTLLSDFKCQQQVPEMYLDVLASRLGMHDASDEALRVELNRYSLKVQGLLGRRCPTPMLSGYWKNDPFSPEEDSRLITSSSADGKLLEIPFNPVYRNFDKGLQEITGWIEKRLC</sequence>
<name>FRSA_SHIFL</name>
<evidence type="ECO:0000255" key="1">
    <source>
        <dbReference type="HAMAP-Rule" id="MF_01063"/>
    </source>
</evidence>